<accession>Q9BYV8</accession>
<accession>A4D1M0</accession>
<accession>B4DQ35</accession>
<accession>F5H0V6</accession>
<accession>Q7Z496</accession>
<accession>Q86TM1</accession>
<accession>Q8NFU8</accession>
<accession>Q9H6A3</accession>
<accession>Q9NPV3</accession>
<reference key="1">
    <citation type="journal article" date="2002" name="Gene">
        <title>The gene TSGA14, adjacent to the imprinted gene MEST, escapes genomic imprinting.</title>
        <authorList>
            <person name="Yamada T."/>
            <person name="Kayashima T."/>
            <person name="Yamasaki K."/>
            <person name="Ohta T."/>
            <person name="Yoshiura K."/>
            <person name="Matsumoto N."/>
            <person name="Fujimoto S."/>
            <person name="Niikawa N."/>
            <person name="Kishino T."/>
        </authorList>
    </citation>
    <scope>NUCLEOTIDE SEQUENCE [MRNA] (ISOFORMS 1 AND 3)</scope>
    <scope>TISSUE SPECIFICITY</scope>
</reference>
<reference key="2">
    <citation type="submission" date="2000-08" db="EMBL/GenBank/DDBJ databases">
        <title>Identification of a testis-specific gene (TSGA14) proximal to the MEST/COPG2 imprinting cluster on chromosome 7.</title>
        <authorList>
            <person name="Brunner B."/>
            <person name="Kalamajka R."/>
            <person name="Ropers H.-H."/>
            <person name="Fundele R."/>
            <person name="Kalscheuer V.M."/>
        </authorList>
    </citation>
    <scope>NUCLEOTIDE SEQUENCE [MRNA] (ISOFORM 1)</scope>
</reference>
<reference key="3">
    <citation type="journal article" date="2004" name="Nat. Genet.">
        <title>Complete sequencing and characterization of 21,243 full-length human cDNAs.</title>
        <authorList>
            <person name="Ota T."/>
            <person name="Suzuki Y."/>
            <person name="Nishikawa T."/>
            <person name="Otsuki T."/>
            <person name="Sugiyama T."/>
            <person name="Irie R."/>
            <person name="Wakamatsu A."/>
            <person name="Hayashi K."/>
            <person name="Sato H."/>
            <person name="Nagai K."/>
            <person name="Kimura K."/>
            <person name="Makita H."/>
            <person name="Sekine M."/>
            <person name="Obayashi M."/>
            <person name="Nishi T."/>
            <person name="Shibahara T."/>
            <person name="Tanaka T."/>
            <person name="Ishii S."/>
            <person name="Yamamoto J."/>
            <person name="Saito K."/>
            <person name="Kawai Y."/>
            <person name="Isono Y."/>
            <person name="Nakamura Y."/>
            <person name="Nagahari K."/>
            <person name="Murakami K."/>
            <person name="Yasuda T."/>
            <person name="Iwayanagi T."/>
            <person name="Wagatsuma M."/>
            <person name="Shiratori A."/>
            <person name="Sudo H."/>
            <person name="Hosoiri T."/>
            <person name="Kaku Y."/>
            <person name="Kodaira H."/>
            <person name="Kondo H."/>
            <person name="Sugawara M."/>
            <person name="Takahashi M."/>
            <person name="Kanda K."/>
            <person name="Yokoi T."/>
            <person name="Furuya T."/>
            <person name="Kikkawa E."/>
            <person name="Omura Y."/>
            <person name="Abe K."/>
            <person name="Kamihara K."/>
            <person name="Katsuta N."/>
            <person name="Sato K."/>
            <person name="Tanikawa M."/>
            <person name="Yamazaki M."/>
            <person name="Ninomiya K."/>
            <person name="Ishibashi T."/>
            <person name="Yamashita H."/>
            <person name="Murakawa K."/>
            <person name="Fujimori K."/>
            <person name="Tanai H."/>
            <person name="Kimata M."/>
            <person name="Watanabe M."/>
            <person name="Hiraoka S."/>
            <person name="Chiba Y."/>
            <person name="Ishida S."/>
            <person name="Ono Y."/>
            <person name="Takiguchi S."/>
            <person name="Watanabe S."/>
            <person name="Yosida M."/>
            <person name="Hotuta T."/>
            <person name="Kusano J."/>
            <person name="Kanehori K."/>
            <person name="Takahashi-Fujii A."/>
            <person name="Hara H."/>
            <person name="Tanase T.-O."/>
            <person name="Nomura Y."/>
            <person name="Togiya S."/>
            <person name="Komai F."/>
            <person name="Hara R."/>
            <person name="Takeuchi K."/>
            <person name="Arita M."/>
            <person name="Imose N."/>
            <person name="Musashino K."/>
            <person name="Yuuki H."/>
            <person name="Oshima A."/>
            <person name="Sasaki N."/>
            <person name="Aotsuka S."/>
            <person name="Yoshikawa Y."/>
            <person name="Matsunawa H."/>
            <person name="Ichihara T."/>
            <person name="Shiohata N."/>
            <person name="Sano S."/>
            <person name="Moriya S."/>
            <person name="Momiyama H."/>
            <person name="Satoh N."/>
            <person name="Takami S."/>
            <person name="Terashima Y."/>
            <person name="Suzuki O."/>
            <person name="Nakagawa S."/>
            <person name="Senoh A."/>
            <person name="Mizoguchi H."/>
            <person name="Goto Y."/>
            <person name="Shimizu F."/>
            <person name="Wakebe H."/>
            <person name="Hishigaki H."/>
            <person name="Watanabe T."/>
            <person name="Sugiyama A."/>
            <person name="Takemoto M."/>
            <person name="Kawakami B."/>
            <person name="Yamazaki M."/>
            <person name="Watanabe K."/>
            <person name="Kumagai A."/>
            <person name="Itakura S."/>
            <person name="Fukuzumi Y."/>
            <person name="Fujimori Y."/>
            <person name="Komiyama M."/>
            <person name="Tashiro H."/>
            <person name="Tanigami A."/>
            <person name="Fujiwara T."/>
            <person name="Ono T."/>
            <person name="Yamada K."/>
            <person name="Fujii Y."/>
            <person name="Ozaki K."/>
            <person name="Hirao M."/>
            <person name="Ohmori Y."/>
            <person name="Kawabata A."/>
            <person name="Hikiji T."/>
            <person name="Kobatake N."/>
            <person name="Inagaki H."/>
            <person name="Ikema Y."/>
            <person name="Okamoto S."/>
            <person name="Okitani R."/>
            <person name="Kawakami T."/>
            <person name="Noguchi S."/>
            <person name="Itoh T."/>
            <person name="Shigeta K."/>
            <person name="Senba T."/>
            <person name="Matsumura K."/>
            <person name="Nakajima Y."/>
            <person name="Mizuno T."/>
            <person name="Morinaga M."/>
            <person name="Sasaki M."/>
            <person name="Togashi T."/>
            <person name="Oyama M."/>
            <person name="Hata H."/>
            <person name="Watanabe M."/>
            <person name="Komatsu T."/>
            <person name="Mizushima-Sugano J."/>
            <person name="Satoh T."/>
            <person name="Shirai Y."/>
            <person name="Takahashi Y."/>
            <person name="Nakagawa K."/>
            <person name="Okumura K."/>
            <person name="Nagase T."/>
            <person name="Nomura N."/>
            <person name="Kikuchi H."/>
            <person name="Masuho Y."/>
            <person name="Yamashita R."/>
            <person name="Nakai K."/>
            <person name="Yada T."/>
            <person name="Nakamura Y."/>
            <person name="Ohara O."/>
            <person name="Isogai T."/>
            <person name="Sugano S."/>
        </authorList>
    </citation>
    <scope>NUCLEOTIDE SEQUENCE [LARGE SCALE MRNA] (ISOFORMS 1 AND 4)</scope>
    <source>
        <tissue>Neuroblastoma</tissue>
        <tissue>Trachea</tissue>
        <tissue>Uterus</tissue>
    </source>
</reference>
<reference key="4">
    <citation type="journal article" date="2003" name="Nature">
        <title>The DNA sequence of human chromosome 7.</title>
        <authorList>
            <person name="Hillier L.W."/>
            <person name="Fulton R.S."/>
            <person name="Fulton L.A."/>
            <person name="Graves T.A."/>
            <person name="Pepin K.H."/>
            <person name="Wagner-McPherson C."/>
            <person name="Layman D."/>
            <person name="Maas J."/>
            <person name="Jaeger S."/>
            <person name="Walker R."/>
            <person name="Wylie K."/>
            <person name="Sekhon M."/>
            <person name="Becker M.C."/>
            <person name="O'Laughlin M.D."/>
            <person name="Schaller M.E."/>
            <person name="Fewell G.A."/>
            <person name="Delehaunty K.D."/>
            <person name="Miner T.L."/>
            <person name="Nash W.E."/>
            <person name="Cordes M."/>
            <person name="Du H."/>
            <person name="Sun H."/>
            <person name="Edwards J."/>
            <person name="Bradshaw-Cordum H."/>
            <person name="Ali J."/>
            <person name="Andrews S."/>
            <person name="Isak A."/>
            <person name="Vanbrunt A."/>
            <person name="Nguyen C."/>
            <person name="Du F."/>
            <person name="Lamar B."/>
            <person name="Courtney L."/>
            <person name="Kalicki J."/>
            <person name="Ozersky P."/>
            <person name="Bielicki L."/>
            <person name="Scott K."/>
            <person name="Holmes A."/>
            <person name="Harkins R."/>
            <person name="Harris A."/>
            <person name="Strong C.M."/>
            <person name="Hou S."/>
            <person name="Tomlinson C."/>
            <person name="Dauphin-Kohlberg S."/>
            <person name="Kozlowicz-Reilly A."/>
            <person name="Leonard S."/>
            <person name="Rohlfing T."/>
            <person name="Rock S.M."/>
            <person name="Tin-Wollam A.-M."/>
            <person name="Abbott A."/>
            <person name="Minx P."/>
            <person name="Maupin R."/>
            <person name="Strowmatt C."/>
            <person name="Latreille P."/>
            <person name="Miller N."/>
            <person name="Johnson D."/>
            <person name="Murray J."/>
            <person name="Woessner J.P."/>
            <person name="Wendl M.C."/>
            <person name="Yang S.-P."/>
            <person name="Schultz B.R."/>
            <person name="Wallis J.W."/>
            <person name="Spieth J."/>
            <person name="Bieri T.A."/>
            <person name="Nelson J.O."/>
            <person name="Berkowicz N."/>
            <person name="Wohldmann P.E."/>
            <person name="Cook L.L."/>
            <person name="Hickenbotham M.T."/>
            <person name="Eldred J."/>
            <person name="Williams D."/>
            <person name="Bedell J.A."/>
            <person name="Mardis E.R."/>
            <person name="Clifton S.W."/>
            <person name="Chissoe S.L."/>
            <person name="Marra M.A."/>
            <person name="Raymond C."/>
            <person name="Haugen E."/>
            <person name="Gillett W."/>
            <person name="Zhou Y."/>
            <person name="James R."/>
            <person name="Phelps K."/>
            <person name="Iadanoto S."/>
            <person name="Bubb K."/>
            <person name="Simms E."/>
            <person name="Levy R."/>
            <person name="Clendenning J."/>
            <person name="Kaul R."/>
            <person name="Kent W.J."/>
            <person name="Furey T.S."/>
            <person name="Baertsch R.A."/>
            <person name="Brent M.R."/>
            <person name="Keibler E."/>
            <person name="Flicek P."/>
            <person name="Bork P."/>
            <person name="Suyama M."/>
            <person name="Bailey J.A."/>
            <person name="Portnoy M.E."/>
            <person name="Torrents D."/>
            <person name="Chinwalla A.T."/>
            <person name="Gish W.R."/>
            <person name="Eddy S.R."/>
            <person name="McPherson J.D."/>
            <person name="Olson M.V."/>
            <person name="Eichler E.E."/>
            <person name="Green E.D."/>
            <person name="Waterston R.H."/>
            <person name="Wilson R.K."/>
        </authorList>
    </citation>
    <scope>NUCLEOTIDE SEQUENCE [LARGE SCALE GENOMIC DNA]</scope>
</reference>
<reference key="5">
    <citation type="journal article" date="2003" name="Science">
        <title>Human chromosome 7: DNA sequence and biology.</title>
        <authorList>
            <person name="Scherer S.W."/>
            <person name="Cheung J."/>
            <person name="MacDonald J.R."/>
            <person name="Osborne L.R."/>
            <person name="Nakabayashi K."/>
            <person name="Herbrick J.-A."/>
            <person name="Carson A.R."/>
            <person name="Parker-Katiraee L."/>
            <person name="Skaug J."/>
            <person name="Khaja R."/>
            <person name="Zhang J."/>
            <person name="Hudek A.K."/>
            <person name="Li M."/>
            <person name="Haddad M."/>
            <person name="Duggan G.E."/>
            <person name="Fernandez B.A."/>
            <person name="Kanematsu E."/>
            <person name="Gentles S."/>
            <person name="Christopoulos C.C."/>
            <person name="Choufani S."/>
            <person name="Kwasnicka D."/>
            <person name="Zheng X.H."/>
            <person name="Lai Z."/>
            <person name="Nusskern D.R."/>
            <person name="Zhang Q."/>
            <person name="Gu Z."/>
            <person name="Lu F."/>
            <person name="Zeesman S."/>
            <person name="Nowaczyk M.J."/>
            <person name="Teshima I."/>
            <person name="Chitayat D."/>
            <person name="Shuman C."/>
            <person name="Weksberg R."/>
            <person name="Zackai E.H."/>
            <person name="Grebe T.A."/>
            <person name="Cox S.R."/>
            <person name="Kirkpatrick S.J."/>
            <person name="Rahman N."/>
            <person name="Friedman J.M."/>
            <person name="Heng H.H.Q."/>
            <person name="Pelicci P.G."/>
            <person name="Lo-Coco F."/>
            <person name="Belloni E."/>
            <person name="Shaffer L.G."/>
            <person name="Pober B."/>
            <person name="Morton C.C."/>
            <person name="Gusella J.F."/>
            <person name="Bruns G.A.P."/>
            <person name="Korf B.R."/>
            <person name="Quade B.J."/>
            <person name="Ligon A.H."/>
            <person name="Ferguson H."/>
            <person name="Higgins A.W."/>
            <person name="Leach N.T."/>
            <person name="Herrick S.R."/>
            <person name="Lemyre E."/>
            <person name="Farra C.G."/>
            <person name="Kim H.-G."/>
            <person name="Summers A.M."/>
            <person name="Gripp K.W."/>
            <person name="Roberts W."/>
            <person name="Szatmari P."/>
            <person name="Winsor E.J.T."/>
            <person name="Grzeschik K.-H."/>
            <person name="Teebi A."/>
            <person name="Minassian B.A."/>
            <person name="Kere J."/>
            <person name="Armengol L."/>
            <person name="Pujana M.A."/>
            <person name="Estivill X."/>
            <person name="Wilson M.D."/>
            <person name="Koop B.F."/>
            <person name="Tosi S."/>
            <person name="Moore G.E."/>
            <person name="Boright A.P."/>
            <person name="Zlotorynski E."/>
            <person name="Kerem B."/>
            <person name="Kroisel P.M."/>
            <person name="Petek E."/>
            <person name="Oscier D.G."/>
            <person name="Mould S.J."/>
            <person name="Doehner H."/>
            <person name="Doehner K."/>
            <person name="Rommens J.M."/>
            <person name="Vincent J.B."/>
            <person name="Venter J.C."/>
            <person name="Li P.W."/>
            <person name="Mural R.J."/>
            <person name="Adams M.D."/>
            <person name="Tsui L.-C."/>
        </authorList>
    </citation>
    <scope>NUCLEOTIDE SEQUENCE [LARGE SCALE GENOMIC DNA]</scope>
</reference>
<reference key="6">
    <citation type="submission" date="2005-07" db="EMBL/GenBank/DDBJ databases">
        <authorList>
            <person name="Mural R.J."/>
            <person name="Istrail S."/>
            <person name="Sutton G.G."/>
            <person name="Florea L."/>
            <person name="Halpern A.L."/>
            <person name="Mobarry C.M."/>
            <person name="Lippert R."/>
            <person name="Walenz B."/>
            <person name="Shatkay H."/>
            <person name="Dew I."/>
            <person name="Miller J.R."/>
            <person name="Flanigan M.J."/>
            <person name="Edwards N.J."/>
            <person name="Bolanos R."/>
            <person name="Fasulo D."/>
            <person name="Halldorsson B.V."/>
            <person name="Hannenhalli S."/>
            <person name="Turner R."/>
            <person name="Yooseph S."/>
            <person name="Lu F."/>
            <person name="Nusskern D.R."/>
            <person name="Shue B.C."/>
            <person name="Zheng X.H."/>
            <person name="Zhong F."/>
            <person name="Delcher A.L."/>
            <person name="Huson D.H."/>
            <person name="Kravitz S.A."/>
            <person name="Mouchard L."/>
            <person name="Reinert K."/>
            <person name="Remington K.A."/>
            <person name="Clark A.G."/>
            <person name="Waterman M.S."/>
            <person name="Eichler E.E."/>
            <person name="Adams M.D."/>
            <person name="Hunkapiller M.W."/>
            <person name="Myers E.W."/>
            <person name="Venter J.C."/>
        </authorList>
    </citation>
    <scope>NUCLEOTIDE SEQUENCE [LARGE SCALE GENOMIC DNA]</scope>
</reference>
<reference key="7">
    <citation type="journal article" date="2004" name="Genome Res.">
        <title>The status, quality, and expansion of the NIH full-length cDNA project: the Mammalian Gene Collection (MGC).</title>
        <authorList>
            <consortium name="The MGC Project Team"/>
        </authorList>
    </citation>
    <scope>NUCLEOTIDE SEQUENCE [LARGE SCALE MRNA] (ISOFORM 2)</scope>
    <source>
        <tissue>Eye</tissue>
    </source>
</reference>
<reference key="8">
    <citation type="journal article" date="2007" name="BMC Genomics">
        <title>The full-ORF clone resource of the German cDNA consortium.</title>
        <authorList>
            <person name="Bechtel S."/>
            <person name="Rosenfelder H."/>
            <person name="Duda A."/>
            <person name="Schmidt C.P."/>
            <person name="Ernst U."/>
            <person name="Wellenreuther R."/>
            <person name="Mehrle A."/>
            <person name="Schuster C."/>
            <person name="Bahr A."/>
            <person name="Bloecker H."/>
            <person name="Heubner D."/>
            <person name="Hoerlein A."/>
            <person name="Michel G."/>
            <person name="Wedler H."/>
            <person name="Koehrer K."/>
            <person name="Ottenwaelder B."/>
            <person name="Poustka A."/>
            <person name="Wiemann S."/>
            <person name="Schupp I."/>
        </authorList>
    </citation>
    <scope>NUCLEOTIDE SEQUENCE [LARGE SCALE MRNA] OF 153-373 (ISOFORM 1)</scope>
    <source>
        <tissue>Melanoma</tissue>
    </source>
</reference>
<reference key="9">
    <citation type="submission" date="2002-11" db="EMBL/GenBank/DDBJ databases">
        <authorList>
            <person name="Xu M."/>
            <person name="Xu Y.Z."/>
            <person name="Zhou Z.M."/>
            <person name="Sha J.H."/>
        </authorList>
    </citation>
    <scope>NUCLEOTIDE SEQUENCE [MRNA] OF 215-373</scope>
    <source>
        <tissue>Testis</tissue>
    </source>
</reference>
<reference key="10">
    <citation type="journal article" date="2003" name="Nature">
        <title>Proteomic characterization of the human centrosome by protein correlation profiling.</title>
        <authorList>
            <person name="Andersen J.S."/>
            <person name="Wilkinson C.J."/>
            <person name="Mayor T."/>
            <person name="Mortensen P."/>
            <person name="Nigg E.A."/>
            <person name="Mann M."/>
        </authorList>
    </citation>
    <scope>IDENTIFICATION BY MASS SPECTROMETRY</scope>
    <scope>SUBCELLULAR LOCATION [LARGE SCALE ANALYSIS]</scope>
    <source>
        <tissue>Lymphoblast</tissue>
    </source>
</reference>
<reference key="11">
    <citation type="journal article" date="2009" name="Sci. Signal.">
        <title>Quantitative phosphoproteomic analysis of T cell receptor signaling reveals system-wide modulation of protein-protein interactions.</title>
        <authorList>
            <person name="Mayya V."/>
            <person name="Lundgren D.H."/>
            <person name="Hwang S.-I."/>
            <person name="Rezaul K."/>
            <person name="Wu L."/>
            <person name="Eng J.K."/>
            <person name="Rodionov V."/>
            <person name="Han D.K."/>
        </authorList>
    </citation>
    <scope>IDENTIFICATION BY MASS SPECTROMETRY [LARGE SCALE ANALYSIS]</scope>
    <source>
        <tissue>Leukemic T-cell</tissue>
    </source>
</reference>
<reference key="12">
    <citation type="journal article" date="2011" name="Am. J. Med. Genet. B Neuropsychiatr. Genet.">
        <title>Mutations in the TSGA14 gene in families with autism spectrum disorders.</title>
        <authorList>
            <person name="Korvatska O."/>
            <person name="Estes A."/>
            <person name="Munson J."/>
            <person name="Dawson G."/>
            <person name="Bekris L.M."/>
            <person name="Kohen R."/>
            <person name="Yu C.E."/>
            <person name="Schellenberg G.D."/>
            <person name="Raskind W.H."/>
        </authorList>
    </citation>
    <scope>POSSIBLE INVOLVEMENT IN AUTISM</scope>
    <scope>VARIANTS ALA-206 AND GLY-240</scope>
</reference>
<reference key="13">
    <citation type="journal article" date="2011" name="BMC Syst. Biol.">
        <title>Initial characterization of the human central proteome.</title>
        <authorList>
            <person name="Burkard T.R."/>
            <person name="Planyavsky M."/>
            <person name="Kaupe I."/>
            <person name="Breitwieser F.P."/>
            <person name="Buerckstuemmer T."/>
            <person name="Bennett K.L."/>
            <person name="Superti-Furga G."/>
            <person name="Colinge J."/>
        </authorList>
    </citation>
    <scope>IDENTIFICATION BY MASS SPECTROMETRY [LARGE SCALE ANALYSIS]</scope>
</reference>
<reference key="14">
    <citation type="journal article" date="2012" name="Nat. Genet.">
        <title>CEP41 is mutated in Joubert syndrome and is required for tubulin glutamylation at the cilium.</title>
        <authorList>
            <person name="Lee J.E."/>
            <person name="Silhavy J.L."/>
            <person name="Zaki M.S."/>
            <person name="Schroth J."/>
            <person name="Bielas S.L."/>
            <person name="Marsh S.E."/>
            <person name="Olvera J."/>
            <person name="Brancati F."/>
            <person name="Iannicelli M."/>
            <person name="Ikegami K."/>
            <person name="Schlossman A.M."/>
            <person name="Merriman B."/>
            <person name="Attie-Bitach T."/>
            <person name="Logan C.V."/>
            <person name="Glass I.A."/>
            <person name="Cluckey A."/>
            <person name="Louie C.M."/>
            <person name="Lee J.H."/>
            <person name="Raynes H.R."/>
            <person name="Rapin I."/>
            <person name="Castroviejo I.P."/>
            <person name="Setou M."/>
            <person name="Barbot C."/>
            <person name="Boltshauser E."/>
            <person name="Nelson S.F."/>
            <person name="Hildebrandt F."/>
            <person name="Johnson C.A."/>
            <person name="Doherty D.A."/>
            <person name="Valente E.M."/>
            <person name="Gleeson J.G."/>
        </authorList>
    </citation>
    <scope>FUNCTION</scope>
    <scope>SUBCELLULAR LOCATION</scope>
    <scope>INVOLVEMENT IN JBTS15</scope>
    <scope>INTERACTION WITH TTLL6</scope>
    <scope>VARIANTS THR-36; GLU-89; HIS-179 AND CYS-360</scope>
</reference>
<reference key="15">
    <citation type="journal article" date="2013" name="J. Proteome Res.">
        <title>Toward a comprehensive characterization of a human cancer cell phosphoproteome.</title>
        <authorList>
            <person name="Zhou H."/>
            <person name="Di Palma S."/>
            <person name="Preisinger C."/>
            <person name="Peng M."/>
            <person name="Polat A.N."/>
            <person name="Heck A.J."/>
            <person name="Mohammed S."/>
        </authorList>
    </citation>
    <scope>IDENTIFICATION BY MASS SPECTROMETRY [LARGE SCALE ANALYSIS]</scope>
    <source>
        <tissue>Erythroleukemia</tissue>
    </source>
</reference>
<proteinExistence type="evidence at protein level"/>
<name>CEP41_HUMAN</name>
<protein>
    <recommendedName>
        <fullName>Centrosomal protein of 41 kDa</fullName>
        <shortName>Cep41</shortName>
    </recommendedName>
    <alternativeName>
        <fullName>Testis-specific gene A14 protein</fullName>
    </alternativeName>
</protein>
<evidence type="ECO:0000250" key="1">
    <source>
        <dbReference type="UniProtKB" id="Q99NF3"/>
    </source>
</evidence>
<evidence type="ECO:0000255" key="2">
    <source>
        <dbReference type="PROSITE-ProRule" id="PRU00173"/>
    </source>
</evidence>
<evidence type="ECO:0000256" key="3">
    <source>
        <dbReference type="SAM" id="MobiDB-lite"/>
    </source>
</evidence>
<evidence type="ECO:0000269" key="4">
    <source>
    </source>
</evidence>
<evidence type="ECO:0000269" key="5">
    <source>
    </source>
</evidence>
<evidence type="ECO:0000269" key="6">
    <source>
    </source>
</evidence>
<evidence type="ECO:0000269" key="7">
    <source>
    </source>
</evidence>
<evidence type="ECO:0000303" key="8">
    <source>
    </source>
</evidence>
<evidence type="ECO:0000303" key="9">
    <source>
    </source>
</evidence>
<evidence type="ECO:0000303" key="10">
    <source>
    </source>
</evidence>
<evidence type="ECO:0000305" key="11"/>
<organism>
    <name type="scientific">Homo sapiens</name>
    <name type="common">Human</name>
    <dbReference type="NCBI Taxonomy" id="9606"/>
    <lineage>
        <taxon>Eukaryota</taxon>
        <taxon>Metazoa</taxon>
        <taxon>Chordata</taxon>
        <taxon>Craniata</taxon>
        <taxon>Vertebrata</taxon>
        <taxon>Euteleostomi</taxon>
        <taxon>Mammalia</taxon>
        <taxon>Eutheria</taxon>
        <taxon>Euarchontoglires</taxon>
        <taxon>Primates</taxon>
        <taxon>Haplorrhini</taxon>
        <taxon>Catarrhini</taxon>
        <taxon>Hominidae</taxon>
        <taxon>Homo</taxon>
    </lineage>
</organism>
<feature type="chain" id="PRO_0000089489" description="Centrosomal protein of 41 kDa">
    <location>
        <begin position="1"/>
        <end position="373"/>
    </location>
</feature>
<feature type="domain" description="Rhodanese" evidence="2">
    <location>
        <begin position="169"/>
        <end position="266"/>
    </location>
</feature>
<feature type="region of interest" description="Disordered" evidence="3">
    <location>
        <begin position="89"/>
        <end position="137"/>
    </location>
</feature>
<feature type="region of interest" description="Disordered" evidence="3">
    <location>
        <begin position="275"/>
        <end position="373"/>
    </location>
</feature>
<feature type="compositionally biased region" description="Polar residues" evidence="3">
    <location>
        <begin position="106"/>
        <end position="127"/>
    </location>
</feature>
<feature type="compositionally biased region" description="Basic and acidic residues" evidence="3">
    <location>
        <begin position="298"/>
        <end position="312"/>
    </location>
</feature>
<feature type="compositionally biased region" description="Polar residues" evidence="3">
    <location>
        <begin position="355"/>
        <end position="366"/>
    </location>
</feature>
<feature type="modified residue" description="Phosphoserine" evidence="1">
    <location>
        <position position="96"/>
    </location>
</feature>
<feature type="modified residue" description="Phosphoserine" evidence="1">
    <location>
        <position position="99"/>
    </location>
</feature>
<feature type="modified residue" description="Phosphothreonine" evidence="1">
    <location>
        <position position="109"/>
    </location>
</feature>
<feature type="modified residue" description="Phosphoserine" evidence="1">
    <location>
        <position position="121"/>
    </location>
</feature>
<feature type="modified residue" description="Omega-N-methylarginine" evidence="1">
    <location>
        <position position="343"/>
    </location>
</feature>
<feature type="splice variant" id="VSP_042579" description="In isoform 4." evidence="9">
    <original>GNSMTKYTEKLEEIKKN</original>
    <variation>D</variation>
    <location>
        <begin position="33"/>
        <end position="49"/>
    </location>
</feature>
<feature type="splice variant" id="VSP_012246" description="In isoform 3." evidence="8">
    <original>NSMTKYTEKLEEIKKNYRYKK</original>
    <variation>ACVYLTSSPALPDCAMNGLCF</variation>
    <location>
        <begin position="34"/>
        <end position="54"/>
    </location>
</feature>
<feature type="splice variant" id="VSP_012247" description="In isoform 3." evidence="8">
    <location>
        <begin position="55"/>
        <end position="373"/>
    </location>
</feature>
<feature type="splice variant" id="VSP_012248" description="In isoform 2 and isoform 4." evidence="9 10">
    <location>
        <begin position="254"/>
        <end position="325"/>
    </location>
</feature>
<feature type="sequence variant" id="VAR_067053" description="Found in a patient with Joubert syndrome; likely pathogenic; digenic inheritance; the patient also carries a truncating mutation in CC2D2A; dbSNP:rs368178632." evidence="7">
    <original>M</original>
    <variation>T</variation>
    <location>
        <position position="36"/>
    </location>
</feature>
<feature type="sequence variant" id="VAR_067054" description="Found in a patient with Meckel syndrome; uncertain significance." evidence="7">
    <original>Q</original>
    <variation>E</variation>
    <location>
        <position position="89"/>
    </location>
</feature>
<feature type="sequence variant" id="VAR_067055" description="Found in a patient with Joubert syndrome; likely pathogenic; digenic inheritance; the patient also carries a truncating mutation in KIF7; dbSNP:rs140259402." evidence="7">
    <original>R</original>
    <variation>H</variation>
    <location>
        <position position="179"/>
    </location>
</feature>
<feature type="sequence variant" id="VAR_067056" description="Found in a patient with autism; uncertain significance; dbSNP:rs143303575." evidence="6">
    <original>P</original>
    <variation>A</variation>
    <location>
        <position position="206"/>
    </location>
</feature>
<feature type="sequence variant" id="VAR_067057" description="Found in a patient with autism; uncertain significance; dbSNP:rs113941736." evidence="6">
    <original>C</original>
    <variation>G</variation>
    <location>
        <position position="240"/>
    </location>
</feature>
<feature type="sequence variant" id="VAR_067058" description="Found in a patient with Joubert syndrome; likely pathogenic; digenic inheritance; the patient also carries mutation A-1447 in CC2D2A; dbSNP:rs371812716." evidence="7">
    <original>R</original>
    <variation>C</variation>
    <location>
        <position position="360"/>
    </location>
</feature>
<feature type="sequence conflict" description="In Ref. 3; BAB15359." evidence="11" ref="3">
    <original>D</original>
    <variation>G</variation>
    <location>
        <position position="170"/>
    </location>
</feature>
<feature type="sequence conflict" description="In Ref. 8; CAB94886." evidence="11" ref="8">
    <original>P</original>
    <variation>S</variation>
    <location>
        <position position="279"/>
    </location>
</feature>
<comment type="function">
    <text evidence="7">Required during ciliogenesis for tubulin glutamylation in cilium. Probably acts by participating in the transport of TTLL6, a tubulin polyglutamylase, between the basal body and the cilium.</text>
</comment>
<comment type="subunit">
    <text>Found in a complex with TTLL6.</text>
</comment>
<comment type="interaction">
    <interactant intactId="EBI-25843412">
        <id>Q9BYV8-2</id>
    </interactant>
    <interactant intactId="EBI-10976677">
        <id>G5E9A7</id>
        <label>DMWD</label>
    </interactant>
    <organismsDiffer>false</organismsDiffer>
    <experiments>3</experiments>
</comment>
<comment type="interaction">
    <interactant intactId="EBI-25843412">
        <id>Q9BYV8-2</id>
    </interactant>
    <interactant intactId="EBI-5235340">
        <id>Q7Z699</id>
        <label>SPRED1</label>
    </interactant>
    <organismsDiffer>false</organismsDiffer>
    <experiments>3</experiments>
</comment>
<comment type="subcellular location">
    <subcellularLocation>
        <location evidence="5">Cytoplasm</location>
        <location evidence="5">Cytoskeleton</location>
        <location evidence="5">Microtubule organizing center</location>
        <location evidence="5">Centrosome</location>
    </subcellularLocation>
    <subcellularLocation>
        <location>Cell projection</location>
        <location>Cilium</location>
    </subcellularLocation>
    <subcellularLocation>
        <location>Cytoplasm</location>
        <location>Cytoskeleton</location>
        <location>Cilium basal body</location>
    </subcellularLocation>
    <text>Localizes mainly to the cilium basal body and in primary cilia.</text>
</comment>
<comment type="alternative products">
    <event type="alternative splicing"/>
    <isoform>
        <id>Q9BYV8-1</id>
        <name>1</name>
        <name>L-type</name>
        <sequence type="displayed"/>
    </isoform>
    <isoform>
        <id>Q9BYV8-2</id>
        <name>2</name>
        <sequence type="described" ref="VSP_012248"/>
    </isoform>
    <isoform>
        <id>Q9BYV8-4</id>
        <name>3</name>
        <name>S-type</name>
        <sequence type="described" ref="VSP_012246 VSP_012247"/>
    </isoform>
    <isoform>
        <id>Q9BYV8-5</id>
        <name>4</name>
        <sequence type="described" ref="VSP_042579 VSP_012248"/>
    </isoform>
</comment>
<comment type="tissue specificity">
    <molecule>Isoform 1</molecule>
    <text evidence="4">Expressed in testis and fetal tissues.</text>
</comment>
<comment type="tissue specificity">
    <molecule>Isoform 3</molecule>
    <text evidence="4">Expressed in testis and fetal tissues.</text>
</comment>
<comment type="domain">
    <text evidence="7">Although it contains a rhodanese domain, does not display phosphatase activity, suggesting that the protein is enzymatically inactive.</text>
</comment>
<comment type="disease" evidence="7">
    <disease id="DI-03314">
        <name>Joubert syndrome 15</name>
        <acronym>JBTS15</acronym>
        <description>An autosomal recessive disorder presenting with cerebellar ataxia, oculomotor apraxia, hypotonia, neonatal breathing abnormalities and psychomotor delay. Neuroradiologically, it is characterized by cerebellar vermian hypoplasia/aplasia, thickened and reoriented superior cerebellar peduncles, and an abnormally large interpeduncular fossa, giving the appearance of a molar tooth on transaxial slices (molar tooth sign). Additional variable features include retinal dystrophy, renal disease, liver fibrosis and polydactyly.</description>
        <dbReference type="MIM" id="614464"/>
    </disease>
    <text>The disease is caused by variants affecting the gene represented in this entry.</text>
</comment>
<comment type="disease">
    <text evidence="6">Genetic variations in CEP41 may be associated with susceptibility to autism (PubMed:21438139).</text>
</comment>
<comment type="similarity">
    <text evidence="11">Belongs to the CEP41 family.</text>
</comment>
<comment type="sequence caution" evidence="11">
    <conflict type="miscellaneous discrepancy">
        <sequence resource="EMBL-CDS" id="AAO31692"/>
    </conflict>
    <text>Probable cloning artifact.</text>
</comment>
<sequence>MSLRRHIGNPEYLMKRIPQNPRYQHIKSRLDTGNSMTKYTEKLEEIKKNYRYKKDELFKRLKVTTFAQLIIQVASLSDQTLEVTAEEIQRLEDNDSAASDPDAETTARTNGKGNPGEQSPSPEQFINNAGAGDSSRSTLQSVISGVGELDLDKGPVKKAEPHTKDKPYPDCPFLLLDVRDRDSYQQCHIVGAYSYPIATLSRTMNPYSNDILEYKNAHGKIIILYDDDERLASQAATTMCERGFENLFMLSGGLKVLAQKFPEGLITGSLPASCQQALPPGSARKRSSPKGPPLPAENKWRFTPEDLKKIEYYLEEEQGPADHPSRLNQANSSGRESKVPGARSAQNLPGGGPASHSNPRSLSSGHLQGKPWK</sequence>
<dbReference type="EMBL" id="AF429308">
    <property type="protein sequence ID" value="AAM43959.1"/>
    <property type="molecule type" value="mRNA"/>
</dbReference>
<dbReference type="EMBL" id="AF429309">
    <property type="protein sequence ID" value="AAM43960.1"/>
    <property type="molecule type" value="mRNA"/>
</dbReference>
<dbReference type="EMBL" id="AJ278890">
    <property type="protein sequence ID" value="CAC33567.1"/>
    <property type="molecule type" value="mRNA"/>
</dbReference>
<dbReference type="EMBL" id="AK026098">
    <property type="protein sequence ID" value="BAB15359.1"/>
    <property type="molecule type" value="mRNA"/>
</dbReference>
<dbReference type="EMBL" id="AK298618">
    <property type="protein sequence ID" value="BAG60797.1"/>
    <property type="molecule type" value="mRNA"/>
</dbReference>
<dbReference type="EMBL" id="AK314676">
    <property type="protein sequence ID" value="BAG37230.1"/>
    <property type="molecule type" value="mRNA"/>
</dbReference>
<dbReference type="EMBL" id="AC007938">
    <property type="status" value="NOT_ANNOTATED_CDS"/>
    <property type="molecule type" value="Genomic_DNA"/>
</dbReference>
<dbReference type="EMBL" id="CH471070">
    <property type="protein sequence ID" value="EAW83764.1"/>
    <property type="molecule type" value="Genomic_DNA"/>
</dbReference>
<dbReference type="EMBL" id="CH236950">
    <property type="protein sequence ID" value="EAL24088.1"/>
    <property type="molecule type" value="Genomic_DNA"/>
</dbReference>
<dbReference type="EMBL" id="BC056162">
    <property type="protein sequence ID" value="AAH56162.1"/>
    <property type="molecule type" value="mRNA"/>
</dbReference>
<dbReference type="EMBL" id="AL359617">
    <property type="protein sequence ID" value="CAB94886.1"/>
    <property type="molecule type" value="mRNA"/>
</dbReference>
<dbReference type="EMBL" id="AY186739">
    <property type="protein sequence ID" value="AAO31692.1"/>
    <property type="status" value="ALT_SEQ"/>
    <property type="molecule type" value="mRNA"/>
</dbReference>
<dbReference type="CCDS" id="CCDS5821.1">
    <molecule id="Q9BYV8-1"/>
</dbReference>
<dbReference type="CCDS" id="CCDS59078.1">
    <molecule id="Q9BYV8-5"/>
</dbReference>
<dbReference type="CCDS" id="CCDS59079.1">
    <molecule id="Q9BYV8-2"/>
</dbReference>
<dbReference type="CCDS" id="CCDS59080.1">
    <molecule id="Q9BYV8-4"/>
</dbReference>
<dbReference type="PIR" id="T50634">
    <property type="entry name" value="T50634"/>
</dbReference>
<dbReference type="RefSeq" id="NP_001244087.1">
    <molecule id="Q9BYV8-2"/>
    <property type="nucleotide sequence ID" value="NM_001257158.2"/>
</dbReference>
<dbReference type="RefSeq" id="NP_001244088.1">
    <molecule id="Q9BYV8-5"/>
    <property type="nucleotide sequence ID" value="NM_001257159.2"/>
</dbReference>
<dbReference type="RefSeq" id="NP_001244089.1">
    <molecule id="Q9BYV8-4"/>
    <property type="nucleotide sequence ID" value="NM_001257160.2"/>
</dbReference>
<dbReference type="RefSeq" id="NP_061188.1">
    <molecule id="Q9BYV8-1"/>
    <property type="nucleotide sequence ID" value="NM_018718.3"/>
</dbReference>
<dbReference type="SMR" id="Q9BYV8"/>
<dbReference type="BioGRID" id="125173">
    <property type="interactions" value="28"/>
</dbReference>
<dbReference type="FunCoup" id="Q9BYV8">
    <property type="interactions" value="788"/>
</dbReference>
<dbReference type="IntAct" id="Q9BYV8">
    <property type="interactions" value="15"/>
</dbReference>
<dbReference type="STRING" id="9606.ENSP00000223208"/>
<dbReference type="GlyGen" id="Q9BYV8">
    <property type="glycosylation" value="1 site, 1 O-linked glycan (1 site)"/>
</dbReference>
<dbReference type="iPTMnet" id="Q9BYV8"/>
<dbReference type="PhosphoSitePlus" id="Q9BYV8"/>
<dbReference type="BioMuta" id="CEP41"/>
<dbReference type="DMDM" id="56748870"/>
<dbReference type="jPOST" id="Q9BYV8"/>
<dbReference type="MassIVE" id="Q9BYV8"/>
<dbReference type="PaxDb" id="9606-ENSP00000223208"/>
<dbReference type="PeptideAtlas" id="Q9BYV8"/>
<dbReference type="ProteomicsDB" id="79721">
    <molecule id="Q9BYV8-1"/>
</dbReference>
<dbReference type="ProteomicsDB" id="79722">
    <molecule id="Q9BYV8-2"/>
</dbReference>
<dbReference type="ProteomicsDB" id="79724">
    <molecule id="Q9BYV8-4"/>
</dbReference>
<dbReference type="ProteomicsDB" id="79725">
    <molecule id="Q9BYV8-5"/>
</dbReference>
<dbReference type="Pumba" id="Q9BYV8"/>
<dbReference type="Antibodypedia" id="32076">
    <property type="antibodies" value="80 antibodies from 23 providers"/>
</dbReference>
<dbReference type="DNASU" id="95681"/>
<dbReference type="Ensembl" id="ENST00000223208.10">
    <molecule id="Q9BYV8-1"/>
    <property type="protein sequence ID" value="ENSP00000223208.4"/>
    <property type="gene ID" value="ENSG00000106477.20"/>
</dbReference>
<dbReference type="Ensembl" id="ENST00000489512.5">
    <molecule id="Q9BYV8-4"/>
    <property type="protein sequence ID" value="ENSP00000417815.1"/>
    <property type="gene ID" value="ENSG00000106477.20"/>
</dbReference>
<dbReference type="Ensembl" id="ENST00000675596.1">
    <molecule id="Q9BYV8-2"/>
    <property type="protein sequence ID" value="ENSP00000501735.1"/>
    <property type="gene ID" value="ENSG00000106477.20"/>
</dbReference>
<dbReference type="Ensembl" id="ENST00000675962.1">
    <molecule id="Q9BYV8-5"/>
    <property type="protein sequence ID" value="ENSP00000502478.1"/>
    <property type="gene ID" value="ENSG00000106477.20"/>
</dbReference>
<dbReference type="GeneID" id="95681"/>
<dbReference type="KEGG" id="hsa:95681"/>
<dbReference type="MANE-Select" id="ENST00000223208.10">
    <property type="protein sequence ID" value="ENSP00000223208.4"/>
    <property type="RefSeq nucleotide sequence ID" value="NM_018718.3"/>
    <property type="RefSeq protein sequence ID" value="NP_061188.1"/>
</dbReference>
<dbReference type="UCSC" id="uc003vpz.5">
    <molecule id="Q9BYV8-1"/>
    <property type="organism name" value="human"/>
</dbReference>
<dbReference type="AGR" id="HGNC:12370"/>
<dbReference type="CTD" id="95681"/>
<dbReference type="DisGeNET" id="95681"/>
<dbReference type="GeneCards" id="CEP41"/>
<dbReference type="GeneReviews" id="CEP41"/>
<dbReference type="HGNC" id="HGNC:12370">
    <property type="gene designation" value="CEP41"/>
</dbReference>
<dbReference type="HPA" id="ENSG00000106477">
    <property type="expression patterns" value="Tissue enhanced (testis)"/>
</dbReference>
<dbReference type="MalaCards" id="CEP41"/>
<dbReference type="MIM" id="610523">
    <property type="type" value="gene"/>
</dbReference>
<dbReference type="MIM" id="614464">
    <property type="type" value="phenotype"/>
</dbReference>
<dbReference type="neXtProt" id="NX_Q9BYV8"/>
<dbReference type="OpenTargets" id="ENSG00000106477"/>
<dbReference type="Orphanet" id="475">
    <property type="disease" value="Joubert syndrome"/>
</dbReference>
<dbReference type="Orphanet" id="220493">
    <property type="disease" value="Joubert syndrome with ocular defect"/>
</dbReference>
<dbReference type="PharmGKB" id="PA37039"/>
<dbReference type="VEuPathDB" id="HostDB:ENSG00000106477"/>
<dbReference type="eggNOG" id="ENOG502QR8A">
    <property type="taxonomic scope" value="Eukaryota"/>
</dbReference>
<dbReference type="GeneTree" id="ENSGT00390000002222"/>
<dbReference type="HOGENOM" id="CLU_064316_0_0_1"/>
<dbReference type="InParanoid" id="Q9BYV8"/>
<dbReference type="OMA" id="TMCQRGF"/>
<dbReference type="OrthoDB" id="70250at2759"/>
<dbReference type="PAN-GO" id="Q9BYV8">
    <property type="GO annotations" value="3 GO annotations based on evolutionary models"/>
</dbReference>
<dbReference type="PhylomeDB" id="Q9BYV8"/>
<dbReference type="TreeFam" id="TF324682"/>
<dbReference type="PathwayCommons" id="Q9BYV8"/>
<dbReference type="Reactome" id="R-HSA-2565942">
    <property type="pathway name" value="Regulation of PLK1 Activity at G2/M Transition"/>
</dbReference>
<dbReference type="Reactome" id="R-HSA-380259">
    <property type="pathway name" value="Loss of Nlp from mitotic centrosomes"/>
</dbReference>
<dbReference type="Reactome" id="R-HSA-380270">
    <property type="pathway name" value="Recruitment of mitotic centrosome proteins and complexes"/>
</dbReference>
<dbReference type="Reactome" id="R-HSA-380284">
    <property type="pathway name" value="Loss of proteins required for interphase microtubule organization from the centrosome"/>
</dbReference>
<dbReference type="Reactome" id="R-HSA-380320">
    <property type="pathway name" value="Recruitment of NuMA to mitotic centrosomes"/>
</dbReference>
<dbReference type="Reactome" id="R-HSA-5620912">
    <property type="pathway name" value="Anchoring of the basal body to the plasma membrane"/>
</dbReference>
<dbReference type="Reactome" id="R-HSA-8854518">
    <property type="pathway name" value="AURKA Activation by TPX2"/>
</dbReference>
<dbReference type="SignaLink" id="Q9BYV8"/>
<dbReference type="SIGNOR" id="Q9BYV8"/>
<dbReference type="BioGRID-ORCS" id="95681">
    <property type="hits" value="17 hits in 1160 CRISPR screens"/>
</dbReference>
<dbReference type="CD-CODE" id="8C2F96ED">
    <property type="entry name" value="Centrosome"/>
</dbReference>
<dbReference type="ChiTaRS" id="CEP41">
    <property type="organism name" value="human"/>
</dbReference>
<dbReference type="GenomeRNAi" id="95681"/>
<dbReference type="Pharos" id="Q9BYV8">
    <property type="development level" value="Tbio"/>
</dbReference>
<dbReference type="PRO" id="PR:Q9BYV8"/>
<dbReference type="Proteomes" id="UP000005640">
    <property type="component" value="Chromosome 7"/>
</dbReference>
<dbReference type="RNAct" id="Q9BYV8">
    <property type="molecule type" value="protein"/>
</dbReference>
<dbReference type="Bgee" id="ENSG00000106477">
    <property type="expression patterns" value="Expressed in sperm and 157 other cell types or tissues"/>
</dbReference>
<dbReference type="ExpressionAtlas" id="Q9BYV8">
    <property type="expression patterns" value="baseline and differential"/>
</dbReference>
<dbReference type="GO" id="GO:0005814">
    <property type="term" value="C:centriole"/>
    <property type="evidence" value="ECO:0000314"/>
    <property type="project" value="UniProtKB"/>
</dbReference>
<dbReference type="GO" id="GO:0005813">
    <property type="term" value="C:centrosome"/>
    <property type="evidence" value="ECO:0000314"/>
    <property type="project" value="UniProtKB"/>
</dbReference>
<dbReference type="GO" id="GO:0036064">
    <property type="term" value="C:ciliary basal body"/>
    <property type="evidence" value="ECO:0000314"/>
    <property type="project" value="UniProtKB"/>
</dbReference>
<dbReference type="GO" id="GO:0005929">
    <property type="term" value="C:cilium"/>
    <property type="evidence" value="ECO:0000314"/>
    <property type="project" value="UniProtKB"/>
</dbReference>
<dbReference type="GO" id="GO:0005829">
    <property type="term" value="C:cytosol"/>
    <property type="evidence" value="ECO:0000304"/>
    <property type="project" value="Reactome"/>
</dbReference>
<dbReference type="GO" id="GO:0016020">
    <property type="term" value="C:membrane"/>
    <property type="evidence" value="ECO:0007005"/>
    <property type="project" value="UniProtKB"/>
</dbReference>
<dbReference type="GO" id="GO:0060271">
    <property type="term" value="P:cilium assembly"/>
    <property type="evidence" value="ECO:0000315"/>
    <property type="project" value="UniProtKB"/>
</dbReference>
<dbReference type="GO" id="GO:0018095">
    <property type="term" value="P:protein polyglutamylation"/>
    <property type="evidence" value="ECO:0000250"/>
    <property type="project" value="UniProtKB"/>
</dbReference>
<dbReference type="GO" id="GO:0015031">
    <property type="term" value="P:protein transport"/>
    <property type="evidence" value="ECO:0007669"/>
    <property type="project" value="UniProtKB-KW"/>
</dbReference>
<dbReference type="CDD" id="cd00158">
    <property type="entry name" value="RHOD"/>
    <property type="match status" value="1"/>
</dbReference>
<dbReference type="FunFam" id="3.40.250.10:FF:000012">
    <property type="entry name" value="Centrosomal protein of 41 kDa"/>
    <property type="match status" value="1"/>
</dbReference>
<dbReference type="Gene3D" id="3.40.250.10">
    <property type="entry name" value="Rhodanese-like domain"/>
    <property type="match status" value="1"/>
</dbReference>
<dbReference type="InterPro" id="IPR051889">
    <property type="entry name" value="CEP41"/>
</dbReference>
<dbReference type="InterPro" id="IPR001763">
    <property type="entry name" value="Rhodanese-like_dom"/>
</dbReference>
<dbReference type="InterPro" id="IPR036873">
    <property type="entry name" value="Rhodanese-like_dom_sf"/>
</dbReference>
<dbReference type="PANTHER" id="PTHR44390">
    <property type="entry name" value="CENTROSOMAL PROTEIN OF 41 KDA"/>
    <property type="match status" value="1"/>
</dbReference>
<dbReference type="PANTHER" id="PTHR44390:SF1">
    <property type="entry name" value="CENTROSOMAL PROTEIN OF 41 KDA"/>
    <property type="match status" value="1"/>
</dbReference>
<dbReference type="Pfam" id="PF00581">
    <property type="entry name" value="Rhodanese"/>
    <property type="match status" value="1"/>
</dbReference>
<dbReference type="SMART" id="SM00450">
    <property type="entry name" value="RHOD"/>
    <property type="match status" value="1"/>
</dbReference>
<dbReference type="SUPFAM" id="SSF52821">
    <property type="entry name" value="Rhodanese/Cell cycle control phosphatase"/>
    <property type="match status" value="1"/>
</dbReference>
<dbReference type="PROSITE" id="PS50206">
    <property type="entry name" value="RHODANESE_3"/>
    <property type="match status" value="1"/>
</dbReference>
<gene>
    <name type="primary">CEP41</name>
    <name type="synonym">TSGA14</name>
</gene>
<keyword id="KW-0025">Alternative splicing</keyword>
<keyword id="KW-1269">Autism</keyword>
<keyword id="KW-1268">Autism spectrum disorder</keyword>
<keyword id="KW-0966">Cell projection</keyword>
<keyword id="KW-1186">Ciliopathy</keyword>
<keyword id="KW-0969">Cilium</keyword>
<keyword id="KW-0970">Cilium biogenesis/degradation</keyword>
<keyword id="KW-0963">Cytoplasm</keyword>
<keyword id="KW-0206">Cytoskeleton</keyword>
<keyword id="KW-0979">Joubert syndrome</keyword>
<keyword id="KW-0488">Methylation</keyword>
<keyword id="KW-0597">Phosphoprotein</keyword>
<keyword id="KW-0653">Protein transport</keyword>
<keyword id="KW-1267">Proteomics identification</keyword>
<keyword id="KW-1185">Reference proteome</keyword>
<keyword id="KW-0813">Transport</keyword>